<reference key="1">
    <citation type="journal article" date="2009" name="PLoS Pathog.">
        <title>Genomic evidence for the evolution of Streptococcus equi: host restriction, increased virulence, and genetic exchange with human pathogens.</title>
        <authorList>
            <person name="Holden M.T.G."/>
            <person name="Heather Z."/>
            <person name="Paillot R."/>
            <person name="Steward K.F."/>
            <person name="Webb K."/>
            <person name="Ainslie F."/>
            <person name="Jourdan T."/>
            <person name="Bason N.C."/>
            <person name="Holroyd N.E."/>
            <person name="Mungall K."/>
            <person name="Quail M.A."/>
            <person name="Sanders M."/>
            <person name="Simmonds M."/>
            <person name="Willey D."/>
            <person name="Brooks K."/>
            <person name="Aanensen D.M."/>
            <person name="Spratt B.G."/>
            <person name="Jolley K.A."/>
            <person name="Maiden M.C.J."/>
            <person name="Kehoe M."/>
            <person name="Chanter N."/>
            <person name="Bentley S.D."/>
            <person name="Robinson C."/>
            <person name="Maskell D.J."/>
            <person name="Parkhill J."/>
            <person name="Waller A.S."/>
        </authorList>
    </citation>
    <scope>NUCLEOTIDE SEQUENCE [LARGE SCALE GENOMIC DNA]</scope>
    <source>
        <strain>4047</strain>
    </source>
</reference>
<evidence type="ECO:0000255" key="1">
    <source>
        <dbReference type="HAMAP-Rule" id="MF_00394"/>
    </source>
</evidence>
<accession>C0M6I2</accession>
<gene>
    <name evidence="1" type="primary">gpsA</name>
    <name type="ordered locus">SEQ_0290</name>
</gene>
<comment type="function">
    <text evidence="1">Catalyzes the reduction of the glycolytic intermediate dihydroxyacetone phosphate (DHAP) to sn-glycerol 3-phosphate (G3P), the key precursor for phospholipid synthesis.</text>
</comment>
<comment type="catalytic activity">
    <reaction evidence="1">
        <text>sn-glycerol 3-phosphate + NAD(+) = dihydroxyacetone phosphate + NADH + H(+)</text>
        <dbReference type="Rhea" id="RHEA:11092"/>
        <dbReference type="ChEBI" id="CHEBI:15378"/>
        <dbReference type="ChEBI" id="CHEBI:57540"/>
        <dbReference type="ChEBI" id="CHEBI:57597"/>
        <dbReference type="ChEBI" id="CHEBI:57642"/>
        <dbReference type="ChEBI" id="CHEBI:57945"/>
        <dbReference type="EC" id="1.1.1.94"/>
    </reaction>
    <physiologicalReaction direction="right-to-left" evidence="1">
        <dbReference type="Rhea" id="RHEA:11094"/>
    </physiologicalReaction>
</comment>
<comment type="catalytic activity">
    <reaction evidence="1">
        <text>sn-glycerol 3-phosphate + NADP(+) = dihydroxyacetone phosphate + NADPH + H(+)</text>
        <dbReference type="Rhea" id="RHEA:11096"/>
        <dbReference type="ChEBI" id="CHEBI:15378"/>
        <dbReference type="ChEBI" id="CHEBI:57597"/>
        <dbReference type="ChEBI" id="CHEBI:57642"/>
        <dbReference type="ChEBI" id="CHEBI:57783"/>
        <dbReference type="ChEBI" id="CHEBI:58349"/>
        <dbReference type="EC" id="1.1.1.94"/>
    </reaction>
    <physiologicalReaction direction="right-to-left" evidence="1">
        <dbReference type="Rhea" id="RHEA:11098"/>
    </physiologicalReaction>
</comment>
<comment type="pathway">
    <text evidence="1">Membrane lipid metabolism; glycerophospholipid metabolism.</text>
</comment>
<comment type="subcellular location">
    <subcellularLocation>
        <location evidence="1">Cytoplasm</location>
    </subcellularLocation>
</comment>
<comment type="similarity">
    <text evidence="1">Belongs to the NAD-dependent glycerol-3-phosphate dehydrogenase family.</text>
</comment>
<dbReference type="EC" id="1.1.1.94" evidence="1"/>
<dbReference type="EMBL" id="FM204883">
    <property type="protein sequence ID" value="CAW92365.1"/>
    <property type="molecule type" value="Genomic_DNA"/>
</dbReference>
<dbReference type="RefSeq" id="WP_012678949.1">
    <property type="nucleotide sequence ID" value="NC_012471.1"/>
</dbReference>
<dbReference type="SMR" id="C0M6I2"/>
<dbReference type="KEGG" id="seu:SEQ_0290"/>
<dbReference type="HOGENOM" id="CLU_033449_0_2_9"/>
<dbReference type="OrthoDB" id="9812273at2"/>
<dbReference type="UniPathway" id="UPA00940"/>
<dbReference type="Proteomes" id="UP000001365">
    <property type="component" value="Chromosome"/>
</dbReference>
<dbReference type="GO" id="GO:0005829">
    <property type="term" value="C:cytosol"/>
    <property type="evidence" value="ECO:0007669"/>
    <property type="project" value="TreeGrafter"/>
</dbReference>
<dbReference type="GO" id="GO:0047952">
    <property type="term" value="F:glycerol-3-phosphate dehydrogenase [NAD(P)+] activity"/>
    <property type="evidence" value="ECO:0007669"/>
    <property type="project" value="UniProtKB-UniRule"/>
</dbReference>
<dbReference type="GO" id="GO:0051287">
    <property type="term" value="F:NAD binding"/>
    <property type="evidence" value="ECO:0007669"/>
    <property type="project" value="InterPro"/>
</dbReference>
<dbReference type="GO" id="GO:0005975">
    <property type="term" value="P:carbohydrate metabolic process"/>
    <property type="evidence" value="ECO:0007669"/>
    <property type="project" value="InterPro"/>
</dbReference>
<dbReference type="GO" id="GO:0046167">
    <property type="term" value="P:glycerol-3-phosphate biosynthetic process"/>
    <property type="evidence" value="ECO:0007669"/>
    <property type="project" value="UniProtKB-UniRule"/>
</dbReference>
<dbReference type="GO" id="GO:0046168">
    <property type="term" value="P:glycerol-3-phosphate catabolic process"/>
    <property type="evidence" value="ECO:0007669"/>
    <property type="project" value="InterPro"/>
</dbReference>
<dbReference type="GO" id="GO:0006650">
    <property type="term" value="P:glycerophospholipid metabolic process"/>
    <property type="evidence" value="ECO:0007669"/>
    <property type="project" value="UniProtKB-UniRule"/>
</dbReference>
<dbReference type="GO" id="GO:0008654">
    <property type="term" value="P:phospholipid biosynthetic process"/>
    <property type="evidence" value="ECO:0007669"/>
    <property type="project" value="UniProtKB-KW"/>
</dbReference>
<dbReference type="FunFam" id="1.10.1040.10:FF:000001">
    <property type="entry name" value="Glycerol-3-phosphate dehydrogenase [NAD(P)+]"/>
    <property type="match status" value="1"/>
</dbReference>
<dbReference type="FunFam" id="3.40.50.720:FF:000019">
    <property type="entry name" value="Glycerol-3-phosphate dehydrogenase [NAD(P)+]"/>
    <property type="match status" value="1"/>
</dbReference>
<dbReference type="Gene3D" id="1.10.1040.10">
    <property type="entry name" value="N-(1-d-carboxylethyl)-l-norvaline Dehydrogenase, domain 2"/>
    <property type="match status" value="1"/>
</dbReference>
<dbReference type="Gene3D" id="3.40.50.720">
    <property type="entry name" value="NAD(P)-binding Rossmann-like Domain"/>
    <property type="match status" value="1"/>
</dbReference>
<dbReference type="HAMAP" id="MF_00394">
    <property type="entry name" value="NAD_Glyc3P_dehydrog"/>
    <property type="match status" value="1"/>
</dbReference>
<dbReference type="InterPro" id="IPR008927">
    <property type="entry name" value="6-PGluconate_DH-like_C_sf"/>
</dbReference>
<dbReference type="InterPro" id="IPR013328">
    <property type="entry name" value="6PGD_dom2"/>
</dbReference>
<dbReference type="InterPro" id="IPR006168">
    <property type="entry name" value="G3P_DH_NAD-dep"/>
</dbReference>
<dbReference type="InterPro" id="IPR006109">
    <property type="entry name" value="G3P_DH_NAD-dep_C"/>
</dbReference>
<dbReference type="InterPro" id="IPR011128">
    <property type="entry name" value="G3P_DH_NAD-dep_N"/>
</dbReference>
<dbReference type="InterPro" id="IPR036291">
    <property type="entry name" value="NAD(P)-bd_dom_sf"/>
</dbReference>
<dbReference type="NCBIfam" id="NF000940">
    <property type="entry name" value="PRK00094.1-2"/>
    <property type="match status" value="1"/>
</dbReference>
<dbReference type="NCBIfam" id="NF000941">
    <property type="entry name" value="PRK00094.1-3"/>
    <property type="match status" value="1"/>
</dbReference>
<dbReference type="NCBIfam" id="NF000942">
    <property type="entry name" value="PRK00094.1-4"/>
    <property type="match status" value="1"/>
</dbReference>
<dbReference type="PANTHER" id="PTHR11728">
    <property type="entry name" value="GLYCEROL-3-PHOSPHATE DEHYDROGENASE"/>
    <property type="match status" value="1"/>
</dbReference>
<dbReference type="PANTHER" id="PTHR11728:SF1">
    <property type="entry name" value="GLYCEROL-3-PHOSPHATE DEHYDROGENASE [NAD(+)] 2, CHLOROPLASTIC"/>
    <property type="match status" value="1"/>
</dbReference>
<dbReference type="Pfam" id="PF07479">
    <property type="entry name" value="NAD_Gly3P_dh_C"/>
    <property type="match status" value="1"/>
</dbReference>
<dbReference type="Pfam" id="PF01210">
    <property type="entry name" value="NAD_Gly3P_dh_N"/>
    <property type="match status" value="1"/>
</dbReference>
<dbReference type="PIRSF" id="PIRSF000114">
    <property type="entry name" value="Glycerol-3-P_dh"/>
    <property type="match status" value="1"/>
</dbReference>
<dbReference type="PRINTS" id="PR00077">
    <property type="entry name" value="GPDHDRGNASE"/>
</dbReference>
<dbReference type="SUPFAM" id="SSF48179">
    <property type="entry name" value="6-phosphogluconate dehydrogenase C-terminal domain-like"/>
    <property type="match status" value="1"/>
</dbReference>
<dbReference type="SUPFAM" id="SSF51735">
    <property type="entry name" value="NAD(P)-binding Rossmann-fold domains"/>
    <property type="match status" value="1"/>
</dbReference>
<dbReference type="PROSITE" id="PS00957">
    <property type="entry name" value="NAD_G3PDH"/>
    <property type="match status" value="1"/>
</dbReference>
<name>GPDA_STRE4</name>
<feature type="chain" id="PRO_1000190172" description="Glycerol-3-phosphate dehydrogenase [NAD(P)+]">
    <location>
        <begin position="1"/>
        <end position="339"/>
    </location>
</feature>
<feature type="active site" description="Proton acceptor" evidence="1">
    <location>
        <position position="194"/>
    </location>
</feature>
<feature type="binding site" evidence="1">
    <location>
        <position position="13"/>
    </location>
    <ligand>
        <name>NADPH</name>
        <dbReference type="ChEBI" id="CHEBI:57783"/>
    </ligand>
</feature>
<feature type="binding site" evidence="1">
    <location>
        <position position="14"/>
    </location>
    <ligand>
        <name>NADPH</name>
        <dbReference type="ChEBI" id="CHEBI:57783"/>
    </ligand>
</feature>
<feature type="binding site" evidence="1">
    <location>
        <position position="108"/>
    </location>
    <ligand>
        <name>NADPH</name>
        <dbReference type="ChEBI" id="CHEBI:57783"/>
    </ligand>
</feature>
<feature type="binding site" evidence="1">
    <location>
        <position position="108"/>
    </location>
    <ligand>
        <name>sn-glycerol 3-phosphate</name>
        <dbReference type="ChEBI" id="CHEBI:57597"/>
    </ligand>
</feature>
<feature type="binding site" evidence="1">
    <location>
        <position position="139"/>
    </location>
    <ligand>
        <name>sn-glycerol 3-phosphate</name>
        <dbReference type="ChEBI" id="CHEBI:57597"/>
    </ligand>
</feature>
<feature type="binding site" evidence="1">
    <location>
        <position position="141"/>
    </location>
    <ligand>
        <name>sn-glycerol 3-phosphate</name>
        <dbReference type="ChEBI" id="CHEBI:57597"/>
    </ligand>
</feature>
<feature type="binding site" evidence="1">
    <location>
        <position position="143"/>
    </location>
    <ligand>
        <name>NADPH</name>
        <dbReference type="ChEBI" id="CHEBI:57783"/>
    </ligand>
</feature>
<feature type="binding site" evidence="1">
    <location>
        <position position="194"/>
    </location>
    <ligand>
        <name>sn-glycerol 3-phosphate</name>
        <dbReference type="ChEBI" id="CHEBI:57597"/>
    </ligand>
</feature>
<feature type="binding site" evidence="1">
    <location>
        <position position="247"/>
    </location>
    <ligand>
        <name>sn-glycerol 3-phosphate</name>
        <dbReference type="ChEBI" id="CHEBI:57597"/>
    </ligand>
</feature>
<feature type="binding site" evidence="1">
    <location>
        <position position="257"/>
    </location>
    <ligand>
        <name>sn-glycerol 3-phosphate</name>
        <dbReference type="ChEBI" id="CHEBI:57597"/>
    </ligand>
</feature>
<feature type="binding site" evidence="1">
    <location>
        <position position="258"/>
    </location>
    <ligand>
        <name>NADPH</name>
        <dbReference type="ChEBI" id="CHEBI:57783"/>
    </ligand>
</feature>
<feature type="binding site" evidence="1">
    <location>
        <position position="258"/>
    </location>
    <ligand>
        <name>sn-glycerol 3-phosphate</name>
        <dbReference type="ChEBI" id="CHEBI:57597"/>
    </ligand>
</feature>
<feature type="binding site" evidence="1">
    <location>
        <position position="259"/>
    </location>
    <ligand>
        <name>sn-glycerol 3-phosphate</name>
        <dbReference type="ChEBI" id="CHEBI:57597"/>
    </ligand>
</feature>
<feature type="binding site" evidence="1">
    <location>
        <position position="282"/>
    </location>
    <ligand>
        <name>NADPH</name>
        <dbReference type="ChEBI" id="CHEBI:57783"/>
    </ligand>
</feature>
<feature type="binding site" evidence="1">
    <location>
        <position position="284"/>
    </location>
    <ligand>
        <name>NADPH</name>
        <dbReference type="ChEBI" id="CHEBI:57783"/>
    </ligand>
</feature>
<proteinExistence type="inferred from homology"/>
<keyword id="KW-0963">Cytoplasm</keyword>
<keyword id="KW-0444">Lipid biosynthesis</keyword>
<keyword id="KW-0443">Lipid metabolism</keyword>
<keyword id="KW-0520">NAD</keyword>
<keyword id="KW-0521">NADP</keyword>
<keyword id="KW-0547">Nucleotide-binding</keyword>
<keyword id="KW-0560">Oxidoreductase</keyword>
<keyword id="KW-0594">Phospholipid biosynthesis</keyword>
<keyword id="KW-1208">Phospholipid metabolism</keyword>
<sequence>MPKQKVAILGPGSWGTALAQVLNDNGHEVRLWGNIPEQINEINTRHTNSHYFKDIVLDEAIKATLDLKEALADIDAILFVVPTKVTRLVAKQVAQVLDHKAIVMHASKGLEPGTHERLSTILEEEIPAQLRSEVVVVSGPSHAEETIVRDITLITAASKDITAARYVQTLFSNHYFRLYTNTDVIGVETAGALKNIIAVGAGALHGLGYGDNAKAAVITRGLAEITRLGVKLGADPLTYSGLSGVGDLIVTGTSVHSRNWRAGAALGRGEKLKDIENNMGMVIEGISTTKVAYEIAQELGVYMPITSAIYKSIYEGADIKESILGMMSNEFRSENEWHT</sequence>
<organism>
    <name type="scientific">Streptococcus equi subsp. equi (strain 4047)</name>
    <dbReference type="NCBI Taxonomy" id="553482"/>
    <lineage>
        <taxon>Bacteria</taxon>
        <taxon>Bacillati</taxon>
        <taxon>Bacillota</taxon>
        <taxon>Bacilli</taxon>
        <taxon>Lactobacillales</taxon>
        <taxon>Streptococcaceae</taxon>
        <taxon>Streptococcus</taxon>
    </lineage>
</organism>
<protein>
    <recommendedName>
        <fullName evidence="1">Glycerol-3-phosphate dehydrogenase [NAD(P)+]</fullName>
        <ecNumber evidence="1">1.1.1.94</ecNumber>
    </recommendedName>
    <alternativeName>
        <fullName evidence="1">NAD(P)(+)-dependent glycerol-3-phosphate dehydrogenase</fullName>
    </alternativeName>
    <alternativeName>
        <fullName evidence="1">NAD(P)H-dependent dihydroxyacetone-phosphate reductase</fullName>
    </alternativeName>
</protein>